<reference key="1">
    <citation type="submission" date="2002-07" db="EMBL/GenBank/DDBJ databases">
        <title>NEDO cDNA sequencing project.</title>
        <authorList>
            <person name="Suzuki O."/>
            <person name="Sasaki N."/>
            <person name="Aotsuka S."/>
            <person name="Shoji T."/>
            <person name="Ichihara T."/>
            <person name="Shiohata N."/>
            <person name="Matsumoto K."/>
            <person name="Hirano M."/>
            <person name="Sano S."/>
            <person name="Nomura R."/>
            <person name="Yoshikawa Y."/>
            <person name="Matsumura Y."/>
            <person name="Moriya S."/>
            <person name="Chiba E."/>
            <person name="Momiyama H."/>
            <person name="Onogawa S."/>
            <person name="Kaeriyama S."/>
            <person name="Satoh N."/>
            <person name="Matsunawa H."/>
            <person name="Takahashi E."/>
            <person name="Kataoka R."/>
            <person name="Kuga N."/>
            <person name="Kuroda A."/>
            <person name="Satoh I."/>
            <person name="Kamata K."/>
            <person name="Takami S."/>
            <person name="Terashima Y."/>
            <person name="Watanabe M."/>
            <person name="Sugiyama T."/>
            <person name="Irie R."/>
            <person name="Otsuki T."/>
            <person name="Sato H."/>
            <person name="Ota T."/>
            <person name="Wakamatsu A."/>
            <person name="Ishii S."/>
            <person name="Yamamoto J."/>
            <person name="Isono Y."/>
            <person name="Kawai-Hio Y."/>
            <person name="Saito K."/>
            <person name="Nishikawa T."/>
            <person name="Kimura K."/>
            <person name="Yamashita H."/>
            <person name="Matsuo K."/>
            <person name="Nakamura Y."/>
            <person name="Sekine M."/>
            <person name="Kikuchi H."/>
            <person name="Kanda K."/>
            <person name="Wagatsuma M."/>
            <person name="Murakawa K."/>
            <person name="Kanehori K."/>
            <person name="Takahashi-Fujii A."/>
            <person name="Oshima A."/>
            <person name="Sugiyama A."/>
            <person name="Kawakami B."/>
            <person name="Suzuki Y."/>
            <person name="Sugano S."/>
            <person name="Nagahari K."/>
            <person name="Masuho Y."/>
            <person name="Nagai K."/>
            <person name="Isogai T."/>
        </authorList>
    </citation>
    <scope>NUCLEOTIDE SEQUENCE [LARGE SCALE MRNA]</scope>
</reference>
<reference key="2">
    <citation type="journal article" date="2005" name="Science">
        <title>The transcriptional landscape of the mammalian genome.</title>
        <authorList>
            <person name="Carninci P."/>
            <person name="Kasukawa T."/>
            <person name="Katayama S."/>
            <person name="Gough J."/>
            <person name="Frith M.C."/>
            <person name="Maeda N."/>
            <person name="Oyama R."/>
            <person name="Ravasi T."/>
            <person name="Lenhard B."/>
            <person name="Wells C."/>
            <person name="Kodzius R."/>
            <person name="Shimokawa K."/>
            <person name="Bajic V.B."/>
            <person name="Brenner S.E."/>
            <person name="Batalov S."/>
            <person name="Forrest A.R."/>
            <person name="Zavolan M."/>
            <person name="Davis M.J."/>
            <person name="Wilming L.G."/>
            <person name="Aidinis V."/>
            <person name="Allen J.E."/>
            <person name="Ambesi-Impiombato A."/>
            <person name="Apweiler R."/>
            <person name="Aturaliya R.N."/>
            <person name="Bailey T.L."/>
            <person name="Bansal M."/>
            <person name="Baxter L."/>
            <person name="Beisel K.W."/>
            <person name="Bersano T."/>
            <person name="Bono H."/>
            <person name="Chalk A.M."/>
            <person name="Chiu K.P."/>
            <person name="Choudhary V."/>
            <person name="Christoffels A."/>
            <person name="Clutterbuck D.R."/>
            <person name="Crowe M.L."/>
            <person name="Dalla E."/>
            <person name="Dalrymple B.P."/>
            <person name="de Bono B."/>
            <person name="Della Gatta G."/>
            <person name="di Bernardo D."/>
            <person name="Down T."/>
            <person name="Engstrom P."/>
            <person name="Fagiolini M."/>
            <person name="Faulkner G."/>
            <person name="Fletcher C.F."/>
            <person name="Fukushima T."/>
            <person name="Furuno M."/>
            <person name="Futaki S."/>
            <person name="Gariboldi M."/>
            <person name="Georgii-Hemming P."/>
            <person name="Gingeras T.R."/>
            <person name="Gojobori T."/>
            <person name="Green R.E."/>
            <person name="Gustincich S."/>
            <person name="Harbers M."/>
            <person name="Hayashi Y."/>
            <person name="Hensch T.K."/>
            <person name="Hirokawa N."/>
            <person name="Hill D."/>
            <person name="Huminiecki L."/>
            <person name="Iacono M."/>
            <person name="Ikeo K."/>
            <person name="Iwama A."/>
            <person name="Ishikawa T."/>
            <person name="Jakt M."/>
            <person name="Kanapin A."/>
            <person name="Katoh M."/>
            <person name="Kawasawa Y."/>
            <person name="Kelso J."/>
            <person name="Kitamura H."/>
            <person name="Kitano H."/>
            <person name="Kollias G."/>
            <person name="Krishnan S.P."/>
            <person name="Kruger A."/>
            <person name="Kummerfeld S.K."/>
            <person name="Kurochkin I.V."/>
            <person name="Lareau L.F."/>
            <person name="Lazarevic D."/>
            <person name="Lipovich L."/>
            <person name="Liu J."/>
            <person name="Liuni S."/>
            <person name="McWilliam S."/>
            <person name="Madan Babu M."/>
            <person name="Madera M."/>
            <person name="Marchionni L."/>
            <person name="Matsuda H."/>
            <person name="Matsuzawa S."/>
            <person name="Miki H."/>
            <person name="Mignone F."/>
            <person name="Miyake S."/>
            <person name="Morris K."/>
            <person name="Mottagui-Tabar S."/>
            <person name="Mulder N."/>
            <person name="Nakano N."/>
            <person name="Nakauchi H."/>
            <person name="Ng P."/>
            <person name="Nilsson R."/>
            <person name="Nishiguchi S."/>
            <person name="Nishikawa S."/>
            <person name="Nori F."/>
            <person name="Ohara O."/>
            <person name="Okazaki Y."/>
            <person name="Orlando V."/>
            <person name="Pang K.C."/>
            <person name="Pavan W.J."/>
            <person name="Pavesi G."/>
            <person name="Pesole G."/>
            <person name="Petrovsky N."/>
            <person name="Piazza S."/>
            <person name="Reed J."/>
            <person name="Reid J.F."/>
            <person name="Ring B.Z."/>
            <person name="Ringwald M."/>
            <person name="Rost B."/>
            <person name="Ruan Y."/>
            <person name="Salzberg S.L."/>
            <person name="Sandelin A."/>
            <person name="Schneider C."/>
            <person name="Schoenbach C."/>
            <person name="Sekiguchi K."/>
            <person name="Semple C.A."/>
            <person name="Seno S."/>
            <person name="Sessa L."/>
            <person name="Sheng Y."/>
            <person name="Shibata Y."/>
            <person name="Shimada H."/>
            <person name="Shimada K."/>
            <person name="Silva D."/>
            <person name="Sinclair B."/>
            <person name="Sperling S."/>
            <person name="Stupka E."/>
            <person name="Sugiura K."/>
            <person name="Sultana R."/>
            <person name="Takenaka Y."/>
            <person name="Taki K."/>
            <person name="Tammoja K."/>
            <person name="Tan S.L."/>
            <person name="Tang S."/>
            <person name="Taylor M.S."/>
            <person name="Tegner J."/>
            <person name="Teichmann S.A."/>
            <person name="Ueda H.R."/>
            <person name="van Nimwegen E."/>
            <person name="Verardo R."/>
            <person name="Wei C.L."/>
            <person name="Yagi K."/>
            <person name="Yamanishi H."/>
            <person name="Zabarovsky E."/>
            <person name="Zhu S."/>
            <person name="Zimmer A."/>
            <person name="Hide W."/>
            <person name="Bult C."/>
            <person name="Grimmond S.M."/>
            <person name="Teasdale R.D."/>
            <person name="Liu E.T."/>
            <person name="Brusic V."/>
            <person name="Quackenbush J."/>
            <person name="Wahlestedt C."/>
            <person name="Mattick J.S."/>
            <person name="Hume D.A."/>
            <person name="Kai C."/>
            <person name="Sasaki D."/>
            <person name="Tomaru Y."/>
            <person name="Fukuda S."/>
            <person name="Kanamori-Katayama M."/>
            <person name="Suzuki M."/>
            <person name="Aoki J."/>
            <person name="Arakawa T."/>
            <person name="Iida J."/>
            <person name="Imamura K."/>
            <person name="Itoh M."/>
            <person name="Kato T."/>
            <person name="Kawaji H."/>
            <person name="Kawagashira N."/>
            <person name="Kawashima T."/>
            <person name="Kojima M."/>
            <person name="Kondo S."/>
            <person name="Konno H."/>
            <person name="Nakano K."/>
            <person name="Ninomiya N."/>
            <person name="Nishio T."/>
            <person name="Okada M."/>
            <person name="Plessy C."/>
            <person name="Shibata K."/>
            <person name="Shiraki T."/>
            <person name="Suzuki S."/>
            <person name="Tagami M."/>
            <person name="Waki K."/>
            <person name="Watahiki A."/>
            <person name="Okamura-Oho Y."/>
            <person name="Suzuki H."/>
            <person name="Kawai J."/>
            <person name="Hayashizaki Y."/>
        </authorList>
    </citation>
    <scope>NUCLEOTIDE SEQUENCE [LARGE SCALE MRNA]</scope>
    <source>
        <strain>C57BL/6J</strain>
        <strain>NOD</strain>
        <tissue>Egg</tissue>
        <tissue>Pancreas</tissue>
        <tissue>Placenta</tissue>
        <tissue>Thymus</tissue>
    </source>
</reference>
<reference key="3">
    <citation type="journal article" date="2004" name="Genome Res.">
        <title>The status, quality, and expansion of the NIH full-length cDNA project: the Mammalian Gene Collection (MGC).</title>
        <authorList>
            <consortium name="The MGC Project Team"/>
        </authorList>
    </citation>
    <scope>NUCLEOTIDE SEQUENCE [LARGE SCALE MRNA]</scope>
    <source>
        <strain>Czech II</strain>
        <tissue>Mammary tumor</tissue>
        <tissue>Salivary gland</tissue>
    </source>
</reference>
<reference key="4">
    <citation type="journal article" date="2010" name="Cell">
        <title>A tissue-specific atlas of mouse protein phosphorylation and expression.</title>
        <authorList>
            <person name="Huttlin E.L."/>
            <person name="Jedrychowski M.P."/>
            <person name="Elias J.E."/>
            <person name="Goswami T."/>
            <person name="Rad R."/>
            <person name="Beausoleil S.A."/>
            <person name="Villen J."/>
            <person name="Haas W."/>
            <person name="Sowa M.E."/>
            <person name="Gygi S.P."/>
        </authorList>
    </citation>
    <scope>IDENTIFICATION BY MASS SPECTROMETRY [LARGE SCALE ANALYSIS]</scope>
    <source>
        <tissue>Brain</tissue>
        <tissue>Brown adipose tissue</tissue>
        <tissue>Heart</tissue>
        <tissue>Pancreas</tissue>
    </source>
</reference>
<proteinExistence type="evidence at protein level"/>
<protein>
    <recommendedName>
        <fullName>Store-operated calcium entry-associated regulatory factor</fullName>
        <shortName>SARAF</shortName>
        <shortName>SOCE-associated regulatory factor</shortName>
    </recommendedName>
    <alternativeName>
        <fullName>Transmembrane protein 66</fullName>
    </alternativeName>
</protein>
<accession>Q8R3Q0</accession>
<accession>Q8C2F1</accession>
<accession>Q8C6G7</accession>
<accession>Q8N9S4</accession>
<accession>Q8R233</accession>
<accession>Q9D8R1</accession>
<organism>
    <name type="scientific">Mus musculus</name>
    <name type="common">Mouse</name>
    <dbReference type="NCBI Taxonomy" id="10090"/>
    <lineage>
        <taxon>Eukaryota</taxon>
        <taxon>Metazoa</taxon>
        <taxon>Chordata</taxon>
        <taxon>Craniata</taxon>
        <taxon>Vertebrata</taxon>
        <taxon>Euteleostomi</taxon>
        <taxon>Mammalia</taxon>
        <taxon>Eutheria</taxon>
        <taxon>Euarchontoglires</taxon>
        <taxon>Glires</taxon>
        <taxon>Rodentia</taxon>
        <taxon>Myomorpha</taxon>
        <taxon>Muroidea</taxon>
        <taxon>Muridae</taxon>
        <taxon>Murinae</taxon>
        <taxon>Mus</taxon>
        <taxon>Mus</taxon>
    </lineage>
</organism>
<sequence length="334" mass="35856">MAVAAVGRPRALRCPLLLLLSLLLVAGPALGWNDPDRILLRDVKALTLYSDRYTTSRRLDPIPQLKCVGGTAGCEAYTPRVIQCQNKGWDGYDVQWECKTDLDIAYKFGKTVVSCEGYESSEDQYVLRGSCGLEYNLDYTELGLKKLKESGKHQGFSDYYHKLYSSDSCGFITIAVLFVLAFAVYKLFLSDGQGSPPPYSEHPPYSEHSQRFASAAGAPPPGFKSEFTGPQNTGYGASSGFGSAFGGQGYGSSGPGFWSGLGAGGLLGYLFGSNRAATPFSDSWYHPAYPPSHSGAWNSRAYSPLGGGAGSYCASSNADSRTRTASGYGGTRRR</sequence>
<dbReference type="EMBL" id="AK093942">
    <property type="protein sequence ID" value="BAC04255.1"/>
    <property type="status" value="ALT_INIT"/>
    <property type="molecule type" value="mRNA"/>
</dbReference>
<dbReference type="EMBL" id="AK007787">
    <property type="protein sequence ID" value="BAB25254.1"/>
    <property type="status" value="ALT_INIT"/>
    <property type="molecule type" value="mRNA"/>
</dbReference>
<dbReference type="EMBL" id="AK075744">
    <property type="protein sequence ID" value="BAC35924.1"/>
    <property type="molecule type" value="mRNA"/>
</dbReference>
<dbReference type="EMBL" id="AK088728">
    <property type="protein sequence ID" value="BAC40531.1"/>
    <property type="status" value="ALT_INIT"/>
    <property type="molecule type" value="mRNA"/>
</dbReference>
<dbReference type="EMBL" id="AK163218">
    <property type="protein sequence ID" value="BAE37240.1"/>
    <property type="status" value="ALT_INIT"/>
    <property type="molecule type" value="mRNA"/>
</dbReference>
<dbReference type="EMBL" id="BC013497">
    <property type="protein sequence ID" value="AAH13497.1"/>
    <property type="status" value="ALT_INIT"/>
    <property type="molecule type" value="mRNA"/>
</dbReference>
<dbReference type="EMBL" id="BC022616">
    <property type="protein sequence ID" value="AAH22616.1"/>
    <property type="status" value="ALT_INIT"/>
    <property type="molecule type" value="mRNA"/>
</dbReference>
<dbReference type="EMBL" id="BC024888">
    <property type="protein sequence ID" value="AAH24888.1"/>
    <property type="status" value="ALT_INIT"/>
    <property type="molecule type" value="mRNA"/>
</dbReference>
<dbReference type="CCDS" id="CCDS22240.1"/>
<dbReference type="RefSeq" id="NP_080708.3">
    <property type="nucleotide sequence ID" value="NM_026432.3"/>
</dbReference>
<dbReference type="SMR" id="Q8R3Q0"/>
<dbReference type="BioGRID" id="212511">
    <property type="interactions" value="2"/>
</dbReference>
<dbReference type="FunCoup" id="Q8R3Q0">
    <property type="interactions" value="413"/>
</dbReference>
<dbReference type="IntAct" id="Q8R3Q0">
    <property type="interactions" value="1"/>
</dbReference>
<dbReference type="STRING" id="10090.ENSMUSP00000033933"/>
<dbReference type="TCDB" id="3.A.34.1.1">
    <property type="family name" value="the sorting nexins of the escrt complexes (sn-escrt)"/>
</dbReference>
<dbReference type="GlyGen" id="Q8R3Q0">
    <property type="glycosylation" value="1 site"/>
</dbReference>
<dbReference type="PhosphoSitePlus" id="Q8R3Q0"/>
<dbReference type="PaxDb" id="10090-ENSMUSP00000033933"/>
<dbReference type="PeptideAtlas" id="Q8R3Q0"/>
<dbReference type="ProteomicsDB" id="256917"/>
<dbReference type="Pumba" id="Q8R3Q0"/>
<dbReference type="Antibodypedia" id="23198">
    <property type="antibodies" value="109 antibodies from 17 providers"/>
</dbReference>
<dbReference type="DNASU" id="67887"/>
<dbReference type="GeneID" id="67887"/>
<dbReference type="KEGG" id="mmu:67887"/>
<dbReference type="UCSC" id="uc012gci.1">
    <property type="organism name" value="mouse"/>
</dbReference>
<dbReference type="AGR" id="MGI:1915137"/>
<dbReference type="CTD" id="51669"/>
<dbReference type="MGI" id="MGI:1915137">
    <property type="gene designation" value="Saraf"/>
</dbReference>
<dbReference type="VEuPathDB" id="HostDB:ENSMUSG00000031532"/>
<dbReference type="eggNOG" id="ENOG502QT6Y">
    <property type="taxonomic scope" value="Eukaryota"/>
</dbReference>
<dbReference type="InParanoid" id="Q8R3Q0"/>
<dbReference type="OMA" id="WILKGSC"/>
<dbReference type="OrthoDB" id="20303at2759"/>
<dbReference type="PhylomeDB" id="Q8R3Q0"/>
<dbReference type="TreeFam" id="TF314811"/>
<dbReference type="BioGRID-ORCS" id="67887">
    <property type="hits" value="5 hits in 77 CRISPR screens"/>
</dbReference>
<dbReference type="ChiTaRS" id="Saraf">
    <property type="organism name" value="mouse"/>
</dbReference>
<dbReference type="PRO" id="PR:Q8R3Q0"/>
<dbReference type="Proteomes" id="UP000000589">
    <property type="component" value="Chromosome 8"/>
</dbReference>
<dbReference type="RNAct" id="Q8R3Q0">
    <property type="molecule type" value="protein"/>
</dbReference>
<dbReference type="Bgee" id="ENSMUSG00000031532">
    <property type="expression patterns" value="Expressed in olfactory epithelium and 271 other cell types or tissues"/>
</dbReference>
<dbReference type="ExpressionAtlas" id="Q8R3Q0">
    <property type="expression patterns" value="baseline and differential"/>
</dbReference>
<dbReference type="GO" id="GO:0005789">
    <property type="term" value="C:endoplasmic reticulum membrane"/>
    <property type="evidence" value="ECO:0000250"/>
    <property type="project" value="UniProtKB"/>
</dbReference>
<dbReference type="GO" id="GO:0140268">
    <property type="term" value="C:endoplasmic reticulum-plasma membrane contact site"/>
    <property type="evidence" value="ECO:0000250"/>
    <property type="project" value="UniProtKB"/>
</dbReference>
<dbReference type="GO" id="GO:0006816">
    <property type="term" value="P:calcium ion transport"/>
    <property type="evidence" value="ECO:0007669"/>
    <property type="project" value="UniProtKB-KW"/>
</dbReference>
<dbReference type="GO" id="GO:2001256">
    <property type="term" value="P:regulation of store-operated calcium entry"/>
    <property type="evidence" value="ECO:0000250"/>
    <property type="project" value="UniProtKB"/>
</dbReference>
<dbReference type="InterPro" id="IPR009567">
    <property type="entry name" value="SARAF"/>
</dbReference>
<dbReference type="PANTHER" id="PTHR15929">
    <property type="entry name" value="STORE-OPERATED CALCIUM ENTRY-ASSOCIATED REGULATORY FACTOR"/>
    <property type="match status" value="1"/>
</dbReference>
<dbReference type="PANTHER" id="PTHR15929:SF0">
    <property type="entry name" value="STORE-OPERATED CALCIUM ENTRY-ASSOCIATED REGULATORY FACTOR"/>
    <property type="match status" value="1"/>
</dbReference>
<dbReference type="Pfam" id="PF06682">
    <property type="entry name" value="SARAF"/>
    <property type="match status" value="1"/>
</dbReference>
<comment type="function">
    <text evidence="1">Negative regulator of store-operated Ca(2+) entry (SOCE) involved in protecting cells from Ca(2+) overfilling. In response to cytosolic Ca(2+) elevation after endoplasmic reticulum Ca(2+) refilling, promotes a slow inactivation of STIM (STIM1 or STIM2)-dependent SOCE activity: possibly act by facilitating the deoligomerization of STIM to efficiently turn off ORAI when the endoplasmic reticulum lumen is filled with the appropriate Ca(2+) levels, and thus preventing the overload of the cell with excessive Ca(2+) ions (By similarity).</text>
</comment>
<comment type="subunit">
    <text evidence="2">Interacts with STIM1; the interaction is inhibited by the interaction of STIM1 with EFHB.</text>
</comment>
<comment type="subcellular location">
    <subcellularLocation>
        <location evidence="1">Endoplasmic reticulum membrane</location>
        <topology evidence="1">Single-pass type I membrane protein</topology>
    </subcellularLocation>
    <text evidence="1">Translocates to the endoplasmic reticulum-plasma membrane (ER-PM) region in a STIM1-dependent manner following cytosolic Ca(2+) elevation.</text>
</comment>
<comment type="domain">
    <text evidence="1">The cytoplasmic C-terminal region mediates interaction with STIM1, while the N-terminal lumenal region mediates regulation of SOCE activity.</text>
</comment>
<comment type="similarity">
    <text evidence="5">Belongs to the SARAF family.</text>
</comment>
<comment type="sequence caution" evidence="5">
    <conflict type="erroneous initiation">
        <sequence resource="EMBL-CDS" id="AAH13497"/>
    </conflict>
    <text>Extended N-terminus.</text>
</comment>
<comment type="sequence caution" evidence="5">
    <conflict type="erroneous initiation">
        <sequence resource="EMBL-CDS" id="AAH22616"/>
    </conflict>
    <text>Extended N-terminus.</text>
</comment>
<comment type="sequence caution" evidence="5">
    <conflict type="erroneous initiation">
        <sequence resource="EMBL-CDS" id="AAH24888"/>
    </conflict>
    <text>Extended N-terminus.</text>
</comment>
<comment type="sequence caution" evidence="5">
    <conflict type="erroneous initiation">
        <sequence resource="EMBL-CDS" id="BAB25254"/>
    </conflict>
    <text>Extended N-terminus.</text>
</comment>
<comment type="sequence caution" evidence="5">
    <conflict type="erroneous initiation">
        <sequence resource="EMBL-CDS" id="BAC04255"/>
    </conflict>
    <text>Extended N-terminus.</text>
</comment>
<comment type="sequence caution" evidence="5">
    <conflict type="erroneous initiation">
        <sequence resource="EMBL-CDS" id="BAC40531"/>
    </conflict>
    <text>Extended N-terminus.</text>
</comment>
<comment type="sequence caution" evidence="5">
    <conflict type="erroneous initiation">
        <sequence resource="EMBL-CDS" id="BAE37240"/>
    </conflict>
    <text>Extended N-terminus.</text>
</comment>
<keyword id="KW-0106">Calcium</keyword>
<keyword id="KW-0109">Calcium transport</keyword>
<keyword id="KW-0256">Endoplasmic reticulum</keyword>
<keyword id="KW-0406">Ion transport</keyword>
<keyword id="KW-0472">Membrane</keyword>
<keyword id="KW-1185">Reference proteome</keyword>
<keyword id="KW-0732">Signal</keyword>
<keyword id="KW-0812">Transmembrane</keyword>
<keyword id="KW-1133">Transmembrane helix</keyword>
<keyword id="KW-0813">Transport</keyword>
<gene>
    <name type="primary">Saraf</name>
    <name type="synonym">Tmem66</name>
</gene>
<evidence type="ECO:0000250" key="1"/>
<evidence type="ECO:0000250" key="2">
    <source>
        <dbReference type="UniProtKB" id="Q96BY9"/>
    </source>
</evidence>
<evidence type="ECO:0000255" key="3"/>
<evidence type="ECO:0000256" key="4">
    <source>
        <dbReference type="SAM" id="MobiDB-lite"/>
    </source>
</evidence>
<evidence type="ECO:0000305" key="5"/>
<name>SARAF_MOUSE</name>
<feature type="signal peptide" evidence="3">
    <location>
        <begin position="1"/>
        <end position="31"/>
    </location>
</feature>
<feature type="chain" id="PRO_0000045486" description="Store-operated calcium entry-associated regulatory factor">
    <location>
        <begin position="32"/>
        <end position="334"/>
    </location>
</feature>
<feature type="topological domain" description="Lumenal" evidence="3">
    <location>
        <begin position="32"/>
        <end position="168"/>
    </location>
</feature>
<feature type="transmembrane region" description="Helical" evidence="3">
    <location>
        <begin position="169"/>
        <end position="189"/>
    </location>
</feature>
<feature type="topological domain" description="Cytoplasmic" evidence="3">
    <location>
        <begin position="190"/>
        <end position="334"/>
    </location>
</feature>
<feature type="region of interest" description="Disordered" evidence="4">
    <location>
        <begin position="198"/>
        <end position="219"/>
    </location>
</feature>
<feature type="region of interest" description="Disordered" evidence="4">
    <location>
        <begin position="310"/>
        <end position="334"/>
    </location>
</feature>
<feature type="compositionally biased region" description="Polar residues" evidence="4">
    <location>
        <begin position="313"/>
        <end position="325"/>
    </location>
</feature>
<feature type="sequence conflict" description="In Ref. 2; BAC04255/BAC40531 and 3; AAH24888." evidence="5" ref="2 3">
    <original>L</original>
    <variation>V</variation>
    <location>
        <position position="12"/>
    </location>
</feature>
<feature type="sequence conflict" description="In Ref. 3; AAH22616." evidence="5" ref="3">
    <original>G</original>
    <variation>V</variation>
    <location>
        <position position="117"/>
    </location>
</feature>